<gene>
    <name evidence="1" type="primary">panD</name>
    <name type="ordered locus">Bd3565</name>
</gene>
<evidence type="ECO:0000255" key="1">
    <source>
        <dbReference type="HAMAP-Rule" id="MF_00446"/>
    </source>
</evidence>
<name>PAND_BDEBA</name>
<proteinExistence type="inferred from homology"/>
<feature type="chain" id="PRO_0000023039" description="Aspartate 1-decarboxylase beta chain" evidence="1">
    <location>
        <begin position="1"/>
        <end position="24"/>
    </location>
</feature>
<feature type="chain" id="PRO_0000023040" description="Aspartate 1-decarboxylase alpha chain" evidence="1">
    <location>
        <begin position="25"/>
        <end position="124"/>
    </location>
</feature>
<feature type="active site" description="Schiff-base intermediate with substrate; via pyruvic acid" evidence="1">
    <location>
        <position position="25"/>
    </location>
</feature>
<feature type="active site" description="Proton donor" evidence="1">
    <location>
        <position position="58"/>
    </location>
</feature>
<feature type="binding site" evidence="1">
    <location>
        <position position="57"/>
    </location>
    <ligand>
        <name>substrate</name>
    </ligand>
</feature>
<feature type="binding site" evidence="1">
    <location>
        <begin position="71"/>
        <end position="73"/>
    </location>
    <ligand>
        <name>substrate</name>
    </ligand>
</feature>
<feature type="modified residue" description="Pyruvic acid (Ser)" evidence="1">
    <location>
        <position position="25"/>
    </location>
</feature>
<reference key="1">
    <citation type="journal article" date="2004" name="Science">
        <title>A predator unmasked: life cycle of Bdellovibrio bacteriovorus from a genomic perspective.</title>
        <authorList>
            <person name="Rendulic S."/>
            <person name="Jagtap P."/>
            <person name="Rosinus A."/>
            <person name="Eppinger M."/>
            <person name="Baar C."/>
            <person name="Lanz C."/>
            <person name="Keller H."/>
            <person name="Lambert C."/>
            <person name="Evans K.J."/>
            <person name="Goesmann A."/>
            <person name="Meyer F."/>
            <person name="Sockett R.E."/>
            <person name="Schuster S.C."/>
        </authorList>
    </citation>
    <scope>NUCLEOTIDE SEQUENCE [LARGE SCALE GENOMIC DNA]</scope>
    <source>
        <strain>ATCC 15356 / DSM 50701 / NCIMB 9529 / HD100</strain>
    </source>
</reference>
<comment type="function">
    <text evidence="1">Catalyzes the pyruvoyl-dependent decarboxylation of aspartate to produce beta-alanine.</text>
</comment>
<comment type="catalytic activity">
    <reaction evidence="1">
        <text>L-aspartate + H(+) = beta-alanine + CO2</text>
        <dbReference type="Rhea" id="RHEA:19497"/>
        <dbReference type="ChEBI" id="CHEBI:15378"/>
        <dbReference type="ChEBI" id="CHEBI:16526"/>
        <dbReference type="ChEBI" id="CHEBI:29991"/>
        <dbReference type="ChEBI" id="CHEBI:57966"/>
        <dbReference type="EC" id="4.1.1.11"/>
    </reaction>
</comment>
<comment type="cofactor">
    <cofactor evidence="1">
        <name>pyruvate</name>
        <dbReference type="ChEBI" id="CHEBI:15361"/>
    </cofactor>
    <text evidence="1">Binds 1 pyruvoyl group covalently per subunit.</text>
</comment>
<comment type="pathway">
    <text evidence="1">Cofactor biosynthesis; (R)-pantothenate biosynthesis; beta-alanine from L-aspartate: step 1/1.</text>
</comment>
<comment type="subunit">
    <text evidence="1">Heterooctamer of four alpha and four beta subunits.</text>
</comment>
<comment type="subcellular location">
    <subcellularLocation>
        <location evidence="1">Cytoplasm</location>
    </subcellularLocation>
</comment>
<comment type="PTM">
    <text evidence="1">Is synthesized initially as an inactive proenzyme, which is activated by self-cleavage at a specific serine bond to produce a beta-subunit with a hydroxyl group at its C-terminus and an alpha-subunit with a pyruvoyl group at its N-terminus.</text>
</comment>
<comment type="similarity">
    <text evidence="1">Belongs to the PanD family.</text>
</comment>
<protein>
    <recommendedName>
        <fullName evidence="1">Aspartate 1-decarboxylase</fullName>
        <ecNumber evidence="1">4.1.1.11</ecNumber>
    </recommendedName>
    <alternativeName>
        <fullName evidence="1">Aspartate alpha-decarboxylase</fullName>
    </alternativeName>
    <component>
        <recommendedName>
            <fullName evidence="1">Aspartate 1-decarboxylase beta chain</fullName>
        </recommendedName>
    </component>
    <component>
        <recommendedName>
            <fullName evidence="1">Aspartate 1-decarboxylase alpha chain</fullName>
        </recommendedName>
    </component>
</protein>
<keyword id="KW-0068">Autocatalytic cleavage</keyword>
<keyword id="KW-0963">Cytoplasm</keyword>
<keyword id="KW-0210">Decarboxylase</keyword>
<keyword id="KW-0456">Lyase</keyword>
<keyword id="KW-0566">Pantothenate biosynthesis</keyword>
<keyword id="KW-0670">Pyruvate</keyword>
<keyword id="KW-1185">Reference proteome</keyword>
<keyword id="KW-0704">Schiff base</keyword>
<keyword id="KW-0865">Zymogen</keyword>
<accession>Q6MHH9</accession>
<dbReference type="EC" id="4.1.1.11" evidence="1"/>
<dbReference type="EMBL" id="BX842655">
    <property type="protein sequence ID" value="CAE78353.1"/>
    <property type="molecule type" value="Genomic_DNA"/>
</dbReference>
<dbReference type="RefSeq" id="WP_011165891.1">
    <property type="nucleotide sequence ID" value="NC_005363.1"/>
</dbReference>
<dbReference type="SMR" id="Q6MHH9"/>
<dbReference type="STRING" id="264462.Bd3565"/>
<dbReference type="GeneID" id="93014365"/>
<dbReference type="KEGG" id="bba:Bd3565"/>
<dbReference type="eggNOG" id="COG0853">
    <property type="taxonomic scope" value="Bacteria"/>
</dbReference>
<dbReference type="HOGENOM" id="CLU_115305_2_0_7"/>
<dbReference type="UniPathway" id="UPA00028">
    <property type="reaction ID" value="UER00002"/>
</dbReference>
<dbReference type="Proteomes" id="UP000008080">
    <property type="component" value="Chromosome"/>
</dbReference>
<dbReference type="GO" id="GO:0005829">
    <property type="term" value="C:cytosol"/>
    <property type="evidence" value="ECO:0007669"/>
    <property type="project" value="TreeGrafter"/>
</dbReference>
<dbReference type="GO" id="GO:0004068">
    <property type="term" value="F:aspartate 1-decarboxylase activity"/>
    <property type="evidence" value="ECO:0007669"/>
    <property type="project" value="UniProtKB-UniRule"/>
</dbReference>
<dbReference type="GO" id="GO:0006523">
    <property type="term" value="P:alanine biosynthetic process"/>
    <property type="evidence" value="ECO:0007669"/>
    <property type="project" value="InterPro"/>
</dbReference>
<dbReference type="GO" id="GO:0015940">
    <property type="term" value="P:pantothenate biosynthetic process"/>
    <property type="evidence" value="ECO:0007669"/>
    <property type="project" value="UniProtKB-UniRule"/>
</dbReference>
<dbReference type="CDD" id="cd06919">
    <property type="entry name" value="Asp_decarbox"/>
    <property type="match status" value="1"/>
</dbReference>
<dbReference type="Gene3D" id="2.40.40.20">
    <property type="match status" value="1"/>
</dbReference>
<dbReference type="HAMAP" id="MF_00446">
    <property type="entry name" value="PanD"/>
    <property type="match status" value="1"/>
</dbReference>
<dbReference type="InterPro" id="IPR009010">
    <property type="entry name" value="Asp_de-COase-like_dom_sf"/>
</dbReference>
<dbReference type="InterPro" id="IPR003190">
    <property type="entry name" value="Asp_decarbox"/>
</dbReference>
<dbReference type="NCBIfam" id="TIGR00223">
    <property type="entry name" value="panD"/>
    <property type="match status" value="1"/>
</dbReference>
<dbReference type="PANTHER" id="PTHR21012">
    <property type="entry name" value="ASPARTATE 1-DECARBOXYLASE"/>
    <property type="match status" value="1"/>
</dbReference>
<dbReference type="PANTHER" id="PTHR21012:SF0">
    <property type="entry name" value="ASPARTATE 1-DECARBOXYLASE"/>
    <property type="match status" value="1"/>
</dbReference>
<dbReference type="Pfam" id="PF02261">
    <property type="entry name" value="Asp_decarbox"/>
    <property type="match status" value="1"/>
</dbReference>
<dbReference type="PIRSF" id="PIRSF006246">
    <property type="entry name" value="Asp_decarbox"/>
    <property type="match status" value="1"/>
</dbReference>
<dbReference type="SUPFAM" id="SSF50692">
    <property type="entry name" value="ADC-like"/>
    <property type="match status" value="1"/>
</dbReference>
<sequence>MNISLLRTKIHRATVTGADLNYEGSVSICPDLIKASGLLMNERVDIYNCNNGARFSTYVIKGKKGEICLNGAAARHVQKGDLVIICSYCGLSMDEAKKHEPTVVFVNAKNKVTEKRKEDRKNNK</sequence>
<organism>
    <name type="scientific">Bdellovibrio bacteriovorus (strain ATCC 15356 / DSM 50701 / NCIMB 9529 / HD100)</name>
    <dbReference type="NCBI Taxonomy" id="264462"/>
    <lineage>
        <taxon>Bacteria</taxon>
        <taxon>Pseudomonadati</taxon>
        <taxon>Bdellovibrionota</taxon>
        <taxon>Bdellovibrionia</taxon>
        <taxon>Bdellovibrionales</taxon>
        <taxon>Pseudobdellovibrionaceae</taxon>
        <taxon>Bdellovibrio</taxon>
    </lineage>
</organism>